<dbReference type="EC" id="5.3.1.16" evidence="1"/>
<dbReference type="EMBL" id="AP008230">
    <property type="protein sequence ID" value="BAE85698.1"/>
    <property type="molecule type" value="Genomic_DNA"/>
</dbReference>
<dbReference type="RefSeq" id="WP_011461460.1">
    <property type="nucleotide sequence ID" value="NC_007907.1"/>
</dbReference>
<dbReference type="SMR" id="Q24QJ4"/>
<dbReference type="STRING" id="138119.DSY3909"/>
<dbReference type="KEGG" id="dsy:DSY3909"/>
<dbReference type="eggNOG" id="COG0106">
    <property type="taxonomic scope" value="Bacteria"/>
</dbReference>
<dbReference type="HOGENOM" id="CLU_048577_1_1_9"/>
<dbReference type="UniPathway" id="UPA00031">
    <property type="reaction ID" value="UER00009"/>
</dbReference>
<dbReference type="Proteomes" id="UP000001946">
    <property type="component" value="Chromosome"/>
</dbReference>
<dbReference type="GO" id="GO:0005737">
    <property type="term" value="C:cytoplasm"/>
    <property type="evidence" value="ECO:0007669"/>
    <property type="project" value="UniProtKB-SubCell"/>
</dbReference>
<dbReference type="GO" id="GO:0003949">
    <property type="term" value="F:1-(5-phosphoribosyl)-5-[(5-phosphoribosylamino)methylideneamino]imidazole-4-carboxamide isomerase activity"/>
    <property type="evidence" value="ECO:0007669"/>
    <property type="project" value="UniProtKB-UniRule"/>
</dbReference>
<dbReference type="GO" id="GO:0000105">
    <property type="term" value="P:L-histidine biosynthetic process"/>
    <property type="evidence" value="ECO:0007669"/>
    <property type="project" value="UniProtKB-UniRule"/>
</dbReference>
<dbReference type="GO" id="GO:0000162">
    <property type="term" value="P:L-tryptophan biosynthetic process"/>
    <property type="evidence" value="ECO:0007669"/>
    <property type="project" value="TreeGrafter"/>
</dbReference>
<dbReference type="CDD" id="cd04732">
    <property type="entry name" value="HisA"/>
    <property type="match status" value="1"/>
</dbReference>
<dbReference type="FunFam" id="3.20.20.70:FF:000009">
    <property type="entry name" value="1-(5-phosphoribosyl)-5-[(5-phosphoribosylamino)methylideneamino] imidazole-4-carboxamide isomerase"/>
    <property type="match status" value="1"/>
</dbReference>
<dbReference type="Gene3D" id="3.20.20.70">
    <property type="entry name" value="Aldolase class I"/>
    <property type="match status" value="1"/>
</dbReference>
<dbReference type="HAMAP" id="MF_01014">
    <property type="entry name" value="HisA"/>
    <property type="match status" value="1"/>
</dbReference>
<dbReference type="InterPro" id="IPR013785">
    <property type="entry name" value="Aldolase_TIM"/>
</dbReference>
<dbReference type="InterPro" id="IPR006062">
    <property type="entry name" value="His_biosynth"/>
</dbReference>
<dbReference type="InterPro" id="IPR006063">
    <property type="entry name" value="HisA_bact_arch"/>
</dbReference>
<dbReference type="InterPro" id="IPR044524">
    <property type="entry name" value="Isoase_HisA-like"/>
</dbReference>
<dbReference type="InterPro" id="IPR023016">
    <property type="entry name" value="Isoase_HisA-like_bact"/>
</dbReference>
<dbReference type="InterPro" id="IPR011060">
    <property type="entry name" value="RibuloseP-bd_barrel"/>
</dbReference>
<dbReference type="NCBIfam" id="TIGR00007">
    <property type="entry name" value="1-(5-phosphoribosyl)-5-[(5-phosphoribosylamino)methylideneamino]imidazole-4-carboxamide isomerase"/>
    <property type="match status" value="1"/>
</dbReference>
<dbReference type="PANTHER" id="PTHR43090">
    <property type="entry name" value="1-(5-PHOSPHORIBOSYL)-5-[(5-PHOSPHORIBOSYLAMINO)METHYLIDENEAMINO] IMIDAZOLE-4-CARBOXAMIDE ISOMERASE"/>
    <property type="match status" value="1"/>
</dbReference>
<dbReference type="PANTHER" id="PTHR43090:SF2">
    <property type="entry name" value="1-(5-PHOSPHORIBOSYL)-5-[(5-PHOSPHORIBOSYLAMINO)METHYLIDENEAMINO] IMIDAZOLE-4-CARBOXAMIDE ISOMERASE"/>
    <property type="match status" value="1"/>
</dbReference>
<dbReference type="Pfam" id="PF00977">
    <property type="entry name" value="His_biosynth"/>
    <property type="match status" value="1"/>
</dbReference>
<dbReference type="SUPFAM" id="SSF51366">
    <property type="entry name" value="Ribulose-phoshate binding barrel"/>
    <property type="match status" value="1"/>
</dbReference>
<evidence type="ECO:0000255" key="1">
    <source>
        <dbReference type="HAMAP-Rule" id="MF_01014"/>
    </source>
</evidence>
<comment type="catalytic activity">
    <reaction evidence="1">
        <text>1-(5-phospho-beta-D-ribosyl)-5-[(5-phospho-beta-D-ribosylamino)methylideneamino]imidazole-4-carboxamide = 5-[(5-phospho-1-deoxy-D-ribulos-1-ylimino)methylamino]-1-(5-phospho-beta-D-ribosyl)imidazole-4-carboxamide</text>
        <dbReference type="Rhea" id="RHEA:15469"/>
        <dbReference type="ChEBI" id="CHEBI:58435"/>
        <dbReference type="ChEBI" id="CHEBI:58525"/>
        <dbReference type="EC" id="5.3.1.16"/>
    </reaction>
</comment>
<comment type="pathway">
    <text evidence="1">Amino-acid biosynthesis; L-histidine biosynthesis; L-histidine from 5-phospho-alpha-D-ribose 1-diphosphate: step 4/9.</text>
</comment>
<comment type="subcellular location">
    <subcellularLocation>
        <location evidence="1">Cytoplasm</location>
    </subcellularLocation>
</comment>
<comment type="similarity">
    <text evidence="1">Belongs to the HisA/HisF family.</text>
</comment>
<organism>
    <name type="scientific">Desulfitobacterium hafniense (strain Y51)</name>
    <dbReference type="NCBI Taxonomy" id="138119"/>
    <lineage>
        <taxon>Bacteria</taxon>
        <taxon>Bacillati</taxon>
        <taxon>Bacillota</taxon>
        <taxon>Clostridia</taxon>
        <taxon>Eubacteriales</taxon>
        <taxon>Desulfitobacteriaceae</taxon>
        <taxon>Desulfitobacterium</taxon>
    </lineage>
</organism>
<feature type="chain" id="PRO_0000290469" description="1-(5-phosphoribosyl)-5-[(5-phosphoribosylamino)methylideneamino] imidazole-4-carboxamide isomerase">
    <location>
        <begin position="1"/>
        <end position="248"/>
    </location>
</feature>
<feature type="active site" description="Proton acceptor" evidence="1">
    <location>
        <position position="8"/>
    </location>
</feature>
<feature type="active site" description="Proton donor" evidence="1">
    <location>
        <position position="129"/>
    </location>
</feature>
<name>HIS4_DESHY</name>
<gene>
    <name evidence="1" type="primary">hisA</name>
    <name type="ordered locus">DSY3909</name>
</gene>
<sequence length="248" mass="26743">MRLFPAIDLKEGKAVRLLQGRMEDATVYGEQPVEVARKFKEQGADSLHVVDLDGAFAGKPVNDAVILKLIQSSGLRVQVGGGIRTLERMEELLRLGVERVILGTVAVRTPELVEKAVQRFGEAVVIGIDAKDGLVAVQGWAEKTEIRALDLALRMKKVGVKHLVFTDISRDGMLQGPNIQSTVELARLSGLQVVASGGVSRLEDLRLLQEEAKRGVSLEGAIVGKALYTGAFSLAEALRVVGQRSEGK</sequence>
<protein>
    <recommendedName>
        <fullName evidence="1">1-(5-phosphoribosyl)-5-[(5-phosphoribosylamino)methylideneamino] imidazole-4-carboxamide isomerase</fullName>
        <ecNumber evidence="1">5.3.1.16</ecNumber>
    </recommendedName>
    <alternativeName>
        <fullName evidence="1">Phosphoribosylformimino-5-aminoimidazole carboxamide ribotide isomerase</fullName>
    </alternativeName>
</protein>
<proteinExistence type="inferred from homology"/>
<reference key="1">
    <citation type="journal article" date="2006" name="J. Bacteriol.">
        <title>Complete genome sequence of the dehalorespiring bacterium Desulfitobacterium hafniense Y51 and comparison with Dehalococcoides ethenogenes 195.</title>
        <authorList>
            <person name="Nonaka H."/>
            <person name="Keresztes G."/>
            <person name="Shinoda Y."/>
            <person name="Ikenaga Y."/>
            <person name="Abe M."/>
            <person name="Naito K."/>
            <person name="Inatomi K."/>
            <person name="Furukawa K."/>
            <person name="Inui M."/>
            <person name="Yukawa H."/>
        </authorList>
    </citation>
    <scope>NUCLEOTIDE SEQUENCE [LARGE SCALE GENOMIC DNA]</scope>
    <source>
        <strain>Y51</strain>
    </source>
</reference>
<accession>Q24QJ4</accession>
<keyword id="KW-0028">Amino-acid biosynthesis</keyword>
<keyword id="KW-0963">Cytoplasm</keyword>
<keyword id="KW-0368">Histidine biosynthesis</keyword>
<keyword id="KW-0413">Isomerase</keyword>
<keyword id="KW-1185">Reference proteome</keyword>